<dbReference type="EC" id="2.7.7.13"/>
<dbReference type="EMBL" id="AAEY01000013">
    <property type="protein sequence ID" value="EAL22282.1"/>
    <property type="status" value="ALT_INIT"/>
    <property type="molecule type" value="Genomic_DNA"/>
</dbReference>
<dbReference type="RefSeq" id="XP_776929.1">
    <property type="nucleotide sequence ID" value="XM_771836.1"/>
</dbReference>
<dbReference type="SMR" id="P0CO21"/>
<dbReference type="EnsemblFungi" id="AAW42293">
    <property type="protein sequence ID" value="AAW42293"/>
    <property type="gene ID" value="CNC03020"/>
</dbReference>
<dbReference type="GeneID" id="4935084"/>
<dbReference type="KEGG" id="cnb:CNBC4190"/>
<dbReference type="HOGENOM" id="CLU_029499_0_0_1"/>
<dbReference type="OrthoDB" id="455at5206"/>
<dbReference type="UniPathway" id="UPA00126">
    <property type="reaction ID" value="UER00930"/>
</dbReference>
<dbReference type="GO" id="GO:0005737">
    <property type="term" value="C:cytoplasm"/>
    <property type="evidence" value="ECO:0007669"/>
    <property type="project" value="UniProtKB-SubCell"/>
</dbReference>
<dbReference type="GO" id="GO:0005525">
    <property type="term" value="F:GTP binding"/>
    <property type="evidence" value="ECO:0007669"/>
    <property type="project" value="UniProtKB-KW"/>
</dbReference>
<dbReference type="GO" id="GO:0004475">
    <property type="term" value="F:mannose-1-phosphate guanylyltransferase (GTP) activity"/>
    <property type="evidence" value="ECO:0007669"/>
    <property type="project" value="UniProtKB-EC"/>
</dbReference>
<dbReference type="GO" id="GO:0000032">
    <property type="term" value="P:cell wall mannoprotein biosynthetic process"/>
    <property type="evidence" value="ECO:0007669"/>
    <property type="project" value="EnsemblFungi"/>
</dbReference>
<dbReference type="GO" id="GO:0009298">
    <property type="term" value="P:GDP-mannose biosynthetic process"/>
    <property type="evidence" value="ECO:0007669"/>
    <property type="project" value="UniProtKB-UniPathway"/>
</dbReference>
<dbReference type="GO" id="GO:0006486">
    <property type="term" value="P:protein glycosylation"/>
    <property type="evidence" value="ECO:0007669"/>
    <property type="project" value="EnsemblFungi"/>
</dbReference>
<dbReference type="CDD" id="cd05824">
    <property type="entry name" value="LbH_M1P_guanylylT_C"/>
    <property type="match status" value="1"/>
</dbReference>
<dbReference type="CDD" id="cd06425">
    <property type="entry name" value="M1P_guanylylT_B_like_N"/>
    <property type="match status" value="1"/>
</dbReference>
<dbReference type="FunFam" id="3.90.550.10:FF:000013">
    <property type="entry name" value="mannose-1-phosphate guanyltransferase beta"/>
    <property type="match status" value="1"/>
</dbReference>
<dbReference type="Gene3D" id="2.160.10.10">
    <property type="entry name" value="Hexapeptide repeat proteins"/>
    <property type="match status" value="1"/>
</dbReference>
<dbReference type="Gene3D" id="3.90.550.10">
    <property type="entry name" value="Spore Coat Polysaccharide Biosynthesis Protein SpsA, Chain A"/>
    <property type="match status" value="1"/>
</dbReference>
<dbReference type="InterPro" id="IPR056729">
    <property type="entry name" value="GMPPB_C"/>
</dbReference>
<dbReference type="InterPro" id="IPR045233">
    <property type="entry name" value="GMPPB_N"/>
</dbReference>
<dbReference type="InterPro" id="IPR018357">
    <property type="entry name" value="Hexapep_transf_CS"/>
</dbReference>
<dbReference type="InterPro" id="IPR050486">
    <property type="entry name" value="Mannose-1P_guanyltransferase"/>
</dbReference>
<dbReference type="InterPro" id="IPR005835">
    <property type="entry name" value="NTP_transferase_dom"/>
</dbReference>
<dbReference type="InterPro" id="IPR029044">
    <property type="entry name" value="Nucleotide-diphossugar_trans"/>
</dbReference>
<dbReference type="PANTHER" id="PTHR22572">
    <property type="entry name" value="SUGAR-1-PHOSPHATE GUANYL TRANSFERASE"/>
    <property type="match status" value="1"/>
</dbReference>
<dbReference type="Pfam" id="PF25087">
    <property type="entry name" value="GMPPB_C"/>
    <property type="match status" value="1"/>
</dbReference>
<dbReference type="Pfam" id="PF00483">
    <property type="entry name" value="NTP_transferase"/>
    <property type="match status" value="1"/>
</dbReference>
<dbReference type="SUPFAM" id="SSF53448">
    <property type="entry name" value="Nucleotide-diphospho-sugar transferases"/>
    <property type="match status" value="1"/>
</dbReference>
<dbReference type="PROSITE" id="PS00101">
    <property type="entry name" value="HEXAPEP_TRANSFERASES"/>
    <property type="match status" value="2"/>
</dbReference>
<sequence>MKALILVGGFGTRLRPLTLSWPKPLVEFCNKAMILHQIEALVKAGVKDIVLAVNYRPEVMVSVLKKTEEEFGINIHFSVETEPLGTAGPLALAREILGKDDSPFFVLNSDVTCVYPFEAFRDFHIAHKCEGSIMVTKVAEPSAYGVVVTKPNSTVIDRFVEKPVEFVGNRINAGIYIFNPSVLDRIELRPTSIEKEIFPAIAADQQLHSFDLQGFWMDVGQPKDFLAGTCLYLSHLTSQHSPLLTDPSQNKWVYGGNVMVDPSAEIDPTAVIGPNVVIGPDAKIGPGVRLQRCVIMSNATVRDHSWIANSIVGWNSTVGRWTRVENITVLGDDVTIKDELYVNGASVLPHKSISTSITEPRIVM</sequence>
<reference key="1">
    <citation type="journal article" date="2005" name="Science">
        <title>The genome of the basidiomycetous yeast and human pathogen Cryptococcus neoformans.</title>
        <authorList>
            <person name="Loftus B.J."/>
            <person name="Fung E."/>
            <person name="Roncaglia P."/>
            <person name="Rowley D."/>
            <person name="Amedeo P."/>
            <person name="Bruno D."/>
            <person name="Vamathevan J."/>
            <person name="Miranda M."/>
            <person name="Anderson I.J."/>
            <person name="Fraser J.A."/>
            <person name="Allen J.E."/>
            <person name="Bosdet I.E."/>
            <person name="Brent M.R."/>
            <person name="Chiu R."/>
            <person name="Doering T.L."/>
            <person name="Donlin M.J."/>
            <person name="D'Souza C.A."/>
            <person name="Fox D.S."/>
            <person name="Grinberg V."/>
            <person name="Fu J."/>
            <person name="Fukushima M."/>
            <person name="Haas B.J."/>
            <person name="Huang J.C."/>
            <person name="Janbon G."/>
            <person name="Jones S.J.M."/>
            <person name="Koo H.L."/>
            <person name="Krzywinski M.I."/>
            <person name="Kwon-Chung K.J."/>
            <person name="Lengeler K.B."/>
            <person name="Maiti R."/>
            <person name="Marra M.A."/>
            <person name="Marra R.E."/>
            <person name="Mathewson C.A."/>
            <person name="Mitchell T.G."/>
            <person name="Pertea M."/>
            <person name="Riggs F.R."/>
            <person name="Salzberg S.L."/>
            <person name="Schein J.E."/>
            <person name="Shvartsbeyn A."/>
            <person name="Shin H."/>
            <person name="Shumway M."/>
            <person name="Specht C.A."/>
            <person name="Suh B.B."/>
            <person name="Tenney A."/>
            <person name="Utterback T.R."/>
            <person name="Wickes B.L."/>
            <person name="Wortman J.R."/>
            <person name="Wye N.H."/>
            <person name="Kronstad J.W."/>
            <person name="Lodge J.K."/>
            <person name="Heitman J."/>
            <person name="Davis R.W."/>
            <person name="Fraser C.M."/>
            <person name="Hyman R.W."/>
        </authorList>
    </citation>
    <scope>NUCLEOTIDE SEQUENCE [LARGE SCALE GENOMIC DNA]</scope>
    <source>
        <strain>B-3501A</strain>
    </source>
</reference>
<comment type="function">
    <text evidence="1">Involved in cell wall synthesis where it is required for glycosylation. Involved in cell cycle progression through cell-size checkpoint (By similarity).</text>
</comment>
<comment type="catalytic activity">
    <reaction>
        <text>alpha-D-mannose 1-phosphate + GTP + H(+) = GDP-alpha-D-mannose + diphosphate</text>
        <dbReference type="Rhea" id="RHEA:15229"/>
        <dbReference type="ChEBI" id="CHEBI:15378"/>
        <dbReference type="ChEBI" id="CHEBI:33019"/>
        <dbReference type="ChEBI" id="CHEBI:37565"/>
        <dbReference type="ChEBI" id="CHEBI:57527"/>
        <dbReference type="ChEBI" id="CHEBI:58409"/>
        <dbReference type="EC" id="2.7.7.13"/>
    </reaction>
</comment>
<comment type="pathway">
    <text>Nucleotide-sugar biosynthesis; GDP-alpha-D-mannose biosynthesis; GDP-alpha-D-mannose from alpha-D-mannose 1-phosphate (GTP route): step 1/1.</text>
</comment>
<comment type="subcellular location">
    <subcellularLocation>
        <location evidence="1">Cytoplasm</location>
    </subcellularLocation>
</comment>
<comment type="similarity">
    <text evidence="2">Belongs to the transferase hexapeptide repeat family.</text>
</comment>
<comment type="sequence caution" evidence="2">
    <conflict type="erroneous initiation">
        <sequence resource="EMBL-CDS" id="EAL22282"/>
    </conflict>
    <text>Truncated N-terminus.</text>
</comment>
<gene>
    <name type="primary">MPG1</name>
    <name type="synonym">PSA1</name>
    <name type="ordered locus">CNBC4190</name>
</gene>
<keyword id="KW-0131">Cell cycle</keyword>
<keyword id="KW-0963">Cytoplasm</keyword>
<keyword id="KW-0342">GTP-binding</keyword>
<keyword id="KW-0547">Nucleotide-binding</keyword>
<keyword id="KW-0548">Nucleotidyltransferase</keyword>
<keyword id="KW-0808">Transferase</keyword>
<protein>
    <recommendedName>
        <fullName>Mannose-1-phosphate guanyltransferase</fullName>
        <ecNumber>2.7.7.13</ecNumber>
    </recommendedName>
    <alternativeName>
        <fullName>GDP-mannose pyrophosphorylase</fullName>
    </alternativeName>
    <alternativeName>
        <fullName>GTP-mannose-1-phosphate guanylyltransferase</fullName>
    </alternativeName>
</protein>
<proteinExistence type="inferred from homology"/>
<accession>P0CO21</accession>
<accession>Q45T76</accession>
<accession>Q55VR7</accession>
<accession>Q5KKH2</accession>
<accession>Q5WQW2</accession>
<organism>
    <name type="scientific">Cryptococcus neoformans var. neoformans serotype D (strain B-3501A)</name>
    <name type="common">Filobasidiella neoformans</name>
    <dbReference type="NCBI Taxonomy" id="283643"/>
    <lineage>
        <taxon>Eukaryota</taxon>
        <taxon>Fungi</taxon>
        <taxon>Dikarya</taxon>
        <taxon>Basidiomycota</taxon>
        <taxon>Agaricomycotina</taxon>
        <taxon>Tremellomycetes</taxon>
        <taxon>Tremellales</taxon>
        <taxon>Cryptococcaceae</taxon>
        <taxon>Cryptococcus</taxon>
        <taxon>Cryptococcus neoformans species complex</taxon>
    </lineage>
</organism>
<name>MPG1_CRYNB</name>
<feature type="chain" id="PRO_0000410115" description="Mannose-1-phosphate guanyltransferase">
    <location>
        <begin position="1"/>
        <end position="364"/>
    </location>
</feature>
<evidence type="ECO:0000250" key="1"/>
<evidence type="ECO:0000305" key="2"/>